<protein>
    <recommendedName>
        <fullName evidence="1">Exodeoxyribonuclease 7 small subunit</fullName>
        <ecNumber evidence="1">3.1.11.6</ecNumber>
    </recommendedName>
    <alternativeName>
        <fullName evidence="1">Exodeoxyribonuclease VII small subunit</fullName>
        <shortName evidence="1">Exonuclease VII small subunit</shortName>
    </alternativeName>
</protein>
<accession>Q7WL39</accession>
<feature type="chain" id="PRO_0000206925" description="Exodeoxyribonuclease 7 small subunit">
    <location>
        <begin position="1"/>
        <end position="88"/>
    </location>
</feature>
<organism>
    <name type="scientific">Bordetella bronchiseptica (strain ATCC BAA-588 / NCTC 13252 / RB50)</name>
    <name type="common">Alcaligenes bronchisepticus</name>
    <dbReference type="NCBI Taxonomy" id="257310"/>
    <lineage>
        <taxon>Bacteria</taxon>
        <taxon>Pseudomonadati</taxon>
        <taxon>Pseudomonadota</taxon>
        <taxon>Betaproteobacteria</taxon>
        <taxon>Burkholderiales</taxon>
        <taxon>Alcaligenaceae</taxon>
        <taxon>Bordetella</taxon>
    </lineage>
</organism>
<evidence type="ECO:0000255" key="1">
    <source>
        <dbReference type="HAMAP-Rule" id="MF_00337"/>
    </source>
</evidence>
<sequence length="88" mass="9622">MASSKQADPQTDARPLPQDFETALAELESLVSAMENGTLPLEQSLSAYRRGVELARVCQDRLAQAEQQVKVLEGDLLRPLDPAALDDE</sequence>
<reference key="1">
    <citation type="journal article" date="2003" name="Nat. Genet.">
        <title>Comparative analysis of the genome sequences of Bordetella pertussis, Bordetella parapertussis and Bordetella bronchiseptica.</title>
        <authorList>
            <person name="Parkhill J."/>
            <person name="Sebaihia M."/>
            <person name="Preston A."/>
            <person name="Murphy L.D."/>
            <person name="Thomson N.R."/>
            <person name="Harris D.E."/>
            <person name="Holden M.T.G."/>
            <person name="Churcher C.M."/>
            <person name="Bentley S.D."/>
            <person name="Mungall K.L."/>
            <person name="Cerdeno-Tarraga A.-M."/>
            <person name="Temple L."/>
            <person name="James K.D."/>
            <person name="Harris B."/>
            <person name="Quail M.A."/>
            <person name="Achtman M."/>
            <person name="Atkin R."/>
            <person name="Baker S."/>
            <person name="Basham D."/>
            <person name="Bason N."/>
            <person name="Cherevach I."/>
            <person name="Chillingworth T."/>
            <person name="Collins M."/>
            <person name="Cronin A."/>
            <person name="Davis P."/>
            <person name="Doggett J."/>
            <person name="Feltwell T."/>
            <person name="Goble A."/>
            <person name="Hamlin N."/>
            <person name="Hauser H."/>
            <person name="Holroyd S."/>
            <person name="Jagels K."/>
            <person name="Leather S."/>
            <person name="Moule S."/>
            <person name="Norberczak H."/>
            <person name="O'Neil S."/>
            <person name="Ormond D."/>
            <person name="Price C."/>
            <person name="Rabbinowitsch E."/>
            <person name="Rutter S."/>
            <person name="Sanders M."/>
            <person name="Saunders D."/>
            <person name="Seeger K."/>
            <person name="Sharp S."/>
            <person name="Simmonds M."/>
            <person name="Skelton J."/>
            <person name="Squares R."/>
            <person name="Squares S."/>
            <person name="Stevens K."/>
            <person name="Unwin L."/>
            <person name="Whitehead S."/>
            <person name="Barrell B.G."/>
            <person name="Maskell D.J."/>
        </authorList>
    </citation>
    <scope>NUCLEOTIDE SEQUENCE [LARGE SCALE GENOMIC DNA]</scope>
    <source>
        <strain>ATCC BAA-588 / NCTC 13252 / RB50</strain>
    </source>
</reference>
<keyword id="KW-0963">Cytoplasm</keyword>
<keyword id="KW-0269">Exonuclease</keyword>
<keyword id="KW-0378">Hydrolase</keyword>
<keyword id="KW-0540">Nuclease</keyword>
<dbReference type="EC" id="3.1.11.6" evidence="1"/>
<dbReference type="EMBL" id="BX640442">
    <property type="protein sequence ID" value="CAE32407.1"/>
    <property type="molecule type" value="Genomic_DNA"/>
</dbReference>
<dbReference type="RefSeq" id="WP_003813109.1">
    <property type="nucleotide sequence ID" value="NC_002927.3"/>
</dbReference>
<dbReference type="SMR" id="Q7WL39"/>
<dbReference type="KEGG" id="bbr:BB1910"/>
<dbReference type="eggNOG" id="COG1722">
    <property type="taxonomic scope" value="Bacteria"/>
</dbReference>
<dbReference type="HOGENOM" id="CLU_145918_2_0_4"/>
<dbReference type="Proteomes" id="UP000001027">
    <property type="component" value="Chromosome"/>
</dbReference>
<dbReference type="GO" id="GO:0005829">
    <property type="term" value="C:cytosol"/>
    <property type="evidence" value="ECO:0007669"/>
    <property type="project" value="TreeGrafter"/>
</dbReference>
<dbReference type="GO" id="GO:0009318">
    <property type="term" value="C:exodeoxyribonuclease VII complex"/>
    <property type="evidence" value="ECO:0007669"/>
    <property type="project" value="InterPro"/>
</dbReference>
<dbReference type="GO" id="GO:0008855">
    <property type="term" value="F:exodeoxyribonuclease VII activity"/>
    <property type="evidence" value="ECO:0007669"/>
    <property type="project" value="UniProtKB-UniRule"/>
</dbReference>
<dbReference type="GO" id="GO:0006308">
    <property type="term" value="P:DNA catabolic process"/>
    <property type="evidence" value="ECO:0007669"/>
    <property type="project" value="UniProtKB-UniRule"/>
</dbReference>
<dbReference type="Gene3D" id="1.10.287.1040">
    <property type="entry name" value="Exonuclease VII, small subunit"/>
    <property type="match status" value="1"/>
</dbReference>
<dbReference type="HAMAP" id="MF_00337">
    <property type="entry name" value="Exonuc_7_S"/>
    <property type="match status" value="1"/>
</dbReference>
<dbReference type="InterPro" id="IPR003761">
    <property type="entry name" value="Exonuc_VII_S"/>
</dbReference>
<dbReference type="InterPro" id="IPR037004">
    <property type="entry name" value="Exonuc_VII_ssu_sf"/>
</dbReference>
<dbReference type="NCBIfam" id="NF002140">
    <property type="entry name" value="PRK00977.1-4"/>
    <property type="match status" value="1"/>
</dbReference>
<dbReference type="NCBIfam" id="NF002141">
    <property type="entry name" value="PRK00977.1-5"/>
    <property type="match status" value="1"/>
</dbReference>
<dbReference type="NCBIfam" id="TIGR01280">
    <property type="entry name" value="xseB"/>
    <property type="match status" value="1"/>
</dbReference>
<dbReference type="PANTHER" id="PTHR34137">
    <property type="entry name" value="EXODEOXYRIBONUCLEASE 7 SMALL SUBUNIT"/>
    <property type="match status" value="1"/>
</dbReference>
<dbReference type="PANTHER" id="PTHR34137:SF1">
    <property type="entry name" value="EXODEOXYRIBONUCLEASE 7 SMALL SUBUNIT"/>
    <property type="match status" value="1"/>
</dbReference>
<dbReference type="Pfam" id="PF02609">
    <property type="entry name" value="Exonuc_VII_S"/>
    <property type="match status" value="1"/>
</dbReference>
<dbReference type="PIRSF" id="PIRSF006488">
    <property type="entry name" value="Exonuc_VII_S"/>
    <property type="match status" value="1"/>
</dbReference>
<dbReference type="SUPFAM" id="SSF116842">
    <property type="entry name" value="XseB-like"/>
    <property type="match status" value="1"/>
</dbReference>
<gene>
    <name evidence="1" type="primary">xseB</name>
    <name type="ordered locus">BB1910</name>
</gene>
<comment type="function">
    <text evidence="1">Bidirectionally degrades single-stranded DNA into large acid-insoluble oligonucleotides, which are then degraded further into small acid-soluble oligonucleotides.</text>
</comment>
<comment type="catalytic activity">
    <reaction evidence="1">
        <text>Exonucleolytic cleavage in either 5'- to 3'- or 3'- to 5'-direction to yield nucleoside 5'-phosphates.</text>
        <dbReference type="EC" id="3.1.11.6"/>
    </reaction>
</comment>
<comment type="subunit">
    <text evidence="1">Heterooligomer composed of large and small subunits.</text>
</comment>
<comment type="subcellular location">
    <subcellularLocation>
        <location evidence="1">Cytoplasm</location>
    </subcellularLocation>
</comment>
<comment type="similarity">
    <text evidence="1">Belongs to the XseB family.</text>
</comment>
<name>EX7S_BORBR</name>
<proteinExistence type="inferred from homology"/>